<dbReference type="EC" id="5.2.1.8" evidence="1"/>
<dbReference type="EMBL" id="BX897700">
    <property type="protein sequence ID" value="CAF26215.1"/>
    <property type="molecule type" value="Genomic_DNA"/>
</dbReference>
<dbReference type="RefSeq" id="WP_011179469.1">
    <property type="nucleotide sequence ID" value="NC_005955.1"/>
</dbReference>
<dbReference type="SMR" id="Q6FZK6"/>
<dbReference type="KEGG" id="bqu:BQ07290"/>
<dbReference type="eggNOG" id="COG0544">
    <property type="taxonomic scope" value="Bacteria"/>
</dbReference>
<dbReference type="HOGENOM" id="CLU_033058_2_2_5"/>
<dbReference type="OrthoDB" id="9767721at2"/>
<dbReference type="Proteomes" id="UP000000597">
    <property type="component" value="Chromosome"/>
</dbReference>
<dbReference type="GO" id="GO:0005737">
    <property type="term" value="C:cytoplasm"/>
    <property type="evidence" value="ECO:0007669"/>
    <property type="project" value="UniProtKB-SubCell"/>
</dbReference>
<dbReference type="GO" id="GO:0003755">
    <property type="term" value="F:peptidyl-prolyl cis-trans isomerase activity"/>
    <property type="evidence" value="ECO:0007669"/>
    <property type="project" value="UniProtKB-UniRule"/>
</dbReference>
<dbReference type="GO" id="GO:0044183">
    <property type="term" value="F:protein folding chaperone"/>
    <property type="evidence" value="ECO:0007669"/>
    <property type="project" value="TreeGrafter"/>
</dbReference>
<dbReference type="GO" id="GO:0043022">
    <property type="term" value="F:ribosome binding"/>
    <property type="evidence" value="ECO:0007669"/>
    <property type="project" value="TreeGrafter"/>
</dbReference>
<dbReference type="GO" id="GO:0051083">
    <property type="term" value="P:'de novo' cotranslational protein folding"/>
    <property type="evidence" value="ECO:0007669"/>
    <property type="project" value="TreeGrafter"/>
</dbReference>
<dbReference type="GO" id="GO:0051301">
    <property type="term" value="P:cell division"/>
    <property type="evidence" value="ECO:0007669"/>
    <property type="project" value="UniProtKB-KW"/>
</dbReference>
<dbReference type="GO" id="GO:0061077">
    <property type="term" value="P:chaperone-mediated protein folding"/>
    <property type="evidence" value="ECO:0007669"/>
    <property type="project" value="TreeGrafter"/>
</dbReference>
<dbReference type="GO" id="GO:0015031">
    <property type="term" value="P:protein transport"/>
    <property type="evidence" value="ECO:0007669"/>
    <property type="project" value="UniProtKB-UniRule"/>
</dbReference>
<dbReference type="GO" id="GO:0043335">
    <property type="term" value="P:protein unfolding"/>
    <property type="evidence" value="ECO:0007669"/>
    <property type="project" value="TreeGrafter"/>
</dbReference>
<dbReference type="FunFam" id="3.10.50.40:FF:000001">
    <property type="entry name" value="Trigger factor"/>
    <property type="match status" value="1"/>
</dbReference>
<dbReference type="Gene3D" id="3.10.50.40">
    <property type="match status" value="1"/>
</dbReference>
<dbReference type="Gene3D" id="3.30.70.1050">
    <property type="entry name" value="Trigger factor ribosome-binding domain"/>
    <property type="match status" value="1"/>
</dbReference>
<dbReference type="Gene3D" id="1.10.3120.10">
    <property type="entry name" value="Trigger factor, C-terminal domain"/>
    <property type="match status" value="1"/>
</dbReference>
<dbReference type="HAMAP" id="MF_00303">
    <property type="entry name" value="Trigger_factor_Tig"/>
    <property type="match status" value="1"/>
</dbReference>
<dbReference type="InterPro" id="IPR046357">
    <property type="entry name" value="PPIase_dom_sf"/>
</dbReference>
<dbReference type="InterPro" id="IPR001179">
    <property type="entry name" value="PPIase_FKBP_dom"/>
</dbReference>
<dbReference type="InterPro" id="IPR005215">
    <property type="entry name" value="Trig_fac"/>
</dbReference>
<dbReference type="InterPro" id="IPR008880">
    <property type="entry name" value="Trigger_fac_C"/>
</dbReference>
<dbReference type="InterPro" id="IPR037041">
    <property type="entry name" value="Trigger_fac_C_sf"/>
</dbReference>
<dbReference type="InterPro" id="IPR008881">
    <property type="entry name" value="Trigger_fac_ribosome-bd_bac"/>
</dbReference>
<dbReference type="InterPro" id="IPR036611">
    <property type="entry name" value="Trigger_fac_ribosome-bd_sf"/>
</dbReference>
<dbReference type="InterPro" id="IPR027304">
    <property type="entry name" value="Trigger_fact/SurA_dom_sf"/>
</dbReference>
<dbReference type="NCBIfam" id="TIGR00115">
    <property type="entry name" value="tig"/>
    <property type="match status" value="1"/>
</dbReference>
<dbReference type="PANTHER" id="PTHR30560">
    <property type="entry name" value="TRIGGER FACTOR CHAPERONE AND PEPTIDYL-PROLYL CIS/TRANS ISOMERASE"/>
    <property type="match status" value="1"/>
</dbReference>
<dbReference type="PANTHER" id="PTHR30560:SF3">
    <property type="entry name" value="TRIGGER FACTOR-LIKE PROTEIN TIG, CHLOROPLASTIC"/>
    <property type="match status" value="1"/>
</dbReference>
<dbReference type="Pfam" id="PF00254">
    <property type="entry name" value="FKBP_C"/>
    <property type="match status" value="1"/>
</dbReference>
<dbReference type="Pfam" id="PF05698">
    <property type="entry name" value="Trigger_C"/>
    <property type="match status" value="1"/>
</dbReference>
<dbReference type="Pfam" id="PF05697">
    <property type="entry name" value="Trigger_N"/>
    <property type="match status" value="1"/>
</dbReference>
<dbReference type="PIRSF" id="PIRSF003095">
    <property type="entry name" value="Trigger_factor"/>
    <property type="match status" value="1"/>
</dbReference>
<dbReference type="SUPFAM" id="SSF54534">
    <property type="entry name" value="FKBP-like"/>
    <property type="match status" value="1"/>
</dbReference>
<dbReference type="SUPFAM" id="SSF109998">
    <property type="entry name" value="Triger factor/SurA peptide-binding domain-like"/>
    <property type="match status" value="1"/>
</dbReference>
<dbReference type="SUPFAM" id="SSF102735">
    <property type="entry name" value="Trigger factor ribosome-binding domain"/>
    <property type="match status" value="1"/>
</dbReference>
<dbReference type="PROSITE" id="PS50059">
    <property type="entry name" value="FKBP_PPIASE"/>
    <property type="match status" value="1"/>
</dbReference>
<keyword id="KW-0131">Cell cycle</keyword>
<keyword id="KW-0132">Cell division</keyword>
<keyword id="KW-0143">Chaperone</keyword>
<keyword id="KW-0963">Cytoplasm</keyword>
<keyword id="KW-0413">Isomerase</keyword>
<keyword id="KW-0697">Rotamase</keyword>
<evidence type="ECO:0000255" key="1">
    <source>
        <dbReference type="HAMAP-Rule" id="MF_00303"/>
    </source>
</evidence>
<evidence type="ECO:0000256" key="2">
    <source>
        <dbReference type="SAM" id="MobiDB-lite"/>
    </source>
</evidence>
<gene>
    <name evidence="1" type="primary">tig</name>
    <name type="ordered locus">BQ07290</name>
</gene>
<comment type="function">
    <text evidence="1">Involved in protein export. Acts as a chaperone by maintaining the newly synthesized protein in an open conformation. Functions as a peptidyl-prolyl cis-trans isomerase.</text>
</comment>
<comment type="catalytic activity">
    <reaction evidence="1">
        <text>[protein]-peptidylproline (omega=180) = [protein]-peptidylproline (omega=0)</text>
        <dbReference type="Rhea" id="RHEA:16237"/>
        <dbReference type="Rhea" id="RHEA-COMP:10747"/>
        <dbReference type="Rhea" id="RHEA-COMP:10748"/>
        <dbReference type="ChEBI" id="CHEBI:83833"/>
        <dbReference type="ChEBI" id="CHEBI:83834"/>
        <dbReference type="EC" id="5.2.1.8"/>
    </reaction>
</comment>
<comment type="subcellular location">
    <subcellularLocation>
        <location>Cytoplasm</location>
    </subcellularLocation>
    <text evidence="1">About half TF is bound to the ribosome near the polypeptide exit tunnel while the other half is free in the cytoplasm.</text>
</comment>
<comment type="domain">
    <text evidence="1">Consists of 3 domains; the N-terminus binds the ribosome, the middle domain has PPIase activity, while the C-terminus has intrinsic chaperone activity on its own.</text>
</comment>
<comment type="similarity">
    <text evidence="1">Belongs to the FKBP-type PPIase family. Tig subfamily.</text>
</comment>
<reference key="1">
    <citation type="journal article" date="2004" name="Proc. Natl. Acad. Sci. U.S.A.">
        <title>The louse-borne human pathogen Bartonella quintana is a genomic derivative of the zoonotic agent Bartonella henselae.</title>
        <authorList>
            <person name="Alsmark U.C.M."/>
            <person name="Frank A.C."/>
            <person name="Karlberg E.O."/>
            <person name="Legault B.-A."/>
            <person name="Ardell D.H."/>
            <person name="Canbaeck B."/>
            <person name="Eriksson A.-S."/>
            <person name="Naeslund A.K."/>
            <person name="Handley S.A."/>
            <person name="Huvet M."/>
            <person name="La Scola B."/>
            <person name="Holmberg M."/>
            <person name="Andersson S.G.E."/>
        </authorList>
    </citation>
    <scope>NUCLEOTIDE SEQUENCE [LARGE SCALE GENOMIC DNA]</scope>
    <source>
        <strain>Toulouse</strain>
    </source>
</reference>
<name>TIG_BARQU</name>
<proteinExistence type="inferred from homology"/>
<sequence length="469" mass="53473">MQVTETLNEGLKREIKIVVPAKALEEKLNEWLDDTKDKIKLNGFRPGKVPAEYLRKMYGKSFMAEILNEIISDAPRSILADRNERPAMQPQIDIDEDEKILDGRADFVFSLKYEVLPKFEIKDFDHIEIIREIAAVPEKEIDEQVERVLSSTRSYSLKEGLSEEGDCVTIDYLGKLEGVPFEGGADSDAQLILGSKQFIPGFEEQLVDVKAGDTKTISVKFPDNYSAVHLAGRDAEFDITVKAISKPDELKIDDEAAKKVGLESLERLREVVRGQIESQYGSIIRQKIKRQILDALDADYNFEIPEGLLEIEFNNIWAQVNDDLKKAGRSFEDEGVTEKHAREEYRVLAQRRVRLGLVLSEIGMKADVKISEDELKAAVFDQVRQYPGQEKEIMNFFRNTPEAVANLRAPIFEEKVIDHLLSRIKITDKEVTVEELMKEYDESDLTEKKPEKKKGVEKTPIRKKAPKKG</sequence>
<organism>
    <name type="scientific">Bartonella quintana (strain Toulouse)</name>
    <name type="common">Rochalimaea quintana</name>
    <dbReference type="NCBI Taxonomy" id="283165"/>
    <lineage>
        <taxon>Bacteria</taxon>
        <taxon>Pseudomonadati</taxon>
        <taxon>Pseudomonadota</taxon>
        <taxon>Alphaproteobacteria</taxon>
        <taxon>Hyphomicrobiales</taxon>
        <taxon>Bartonellaceae</taxon>
        <taxon>Bartonella</taxon>
    </lineage>
</organism>
<accession>Q6FZK6</accession>
<feature type="chain" id="PRO_0000179315" description="Trigger factor">
    <location>
        <begin position="1"/>
        <end position="469"/>
    </location>
</feature>
<feature type="domain" description="PPIase FKBP-type" evidence="1">
    <location>
        <begin position="165"/>
        <end position="250"/>
    </location>
</feature>
<feature type="region of interest" description="Disordered" evidence="2">
    <location>
        <begin position="439"/>
        <end position="469"/>
    </location>
</feature>
<feature type="compositionally biased region" description="Basic and acidic residues" evidence="2">
    <location>
        <begin position="439"/>
        <end position="460"/>
    </location>
</feature>
<protein>
    <recommendedName>
        <fullName evidence="1">Trigger factor</fullName>
        <shortName evidence="1">TF</shortName>
        <ecNumber evidence="1">5.2.1.8</ecNumber>
    </recommendedName>
    <alternativeName>
        <fullName evidence="1">PPIase</fullName>
    </alternativeName>
</protein>